<gene>
    <name evidence="1" type="primary">murB</name>
    <name type="ordered locus">DIP0384</name>
</gene>
<protein>
    <recommendedName>
        <fullName evidence="1">UDP-N-acetylenolpyruvoylglucosamine reductase</fullName>
        <ecNumber evidence="1">1.3.1.98</ecNumber>
    </recommendedName>
    <alternativeName>
        <fullName evidence="1">UDP-N-acetylmuramate dehydrogenase</fullName>
    </alternativeName>
</protein>
<proteinExistence type="inferred from homology"/>
<keyword id="KW-0131">Cell cycle</keyword>
<keyword id="KW-0132">Cell division</keyword>
<keyword id="KW-0133">Cell shape</keyword>
<keyword id="KW-0961">Cell wall biogenesis/degradation</keyword>
<keyword id="KW-0963">Cytoplasm</keyword>
<keyword id="KW-0274">FAD</keyword>
<keyword id="KW-0285">Flavoprotein</keyword>
<keyword id="KW-0521">NADP</keyword>
<keyword id="KW-0560">Oxidoreductase</keyword>
<keyword id="KW-0573">Peptidoglycan synthesis</keyword>
<keyword id="KW-1185">Reference proteome</keyword>
<feature type="chain" id="PRO_0000179202" description="UDP-N-acetylenolpyruvoylglucosamine reductase">
    <location>
        <begin position="1"/>
        <end position="377"/>
    </location>
</feature>
<feature type="domain" description="FAD-binding PCMH-type" evidence="1">
    <location>
        <begin position="48"/>
        <end position="215"/>
    </location>
</feature>
<feature type="active site" evidence="1">
    <location>
        <position position="193"/>
    </location>
</feature>
<feature type="active site" description="Proton donor" evidence="1">
    <location>
        <position position="268"/>
    </location>
</feature>
<feature type="active site" evidence="1">
    <location>
        <position position="369"/>
    </location>
</feature>
<sequence>MSCIQTTFNEVLEKSLNHILDGIRPQIEAIDDAAFVAVTFAELTTLHLGGTPMAAVRCRSQHSVVEVVRLLDAHQIPLLIVGGGSNLVIADGEIPLVAVILDCDDISVTLDTGRVVAEAGAVWDDVVRLCVDAGLGGIECLSGIPGSAGATPVQNVGAYGAEISDVLVSVTLLERATGAVMEVPAADLELAYRYSNLKFTGRGVVLGITLQLHTDGMSAPLRFGELARVLGHEGPHPAVQVREAVLGLRAGKGMVYNEADHDTWSAGSFFTNPIVPESVGDHVRSVVGDESMPCFAAGEGMVKLSAAWLIDRAGFAKGHQGPGGRVSLSTKHTLALTNRGNATTDDLVALAREVRGGVMDAFGVLLEPEPVWVGVSI</sequence>
<comment type="function">
    <text evidence="1">Cell wall formation.</text>
</comment>
<comment type="catalytic activity">
    <reaction evidence="1">
        <text>UDP-N-acetyl-alpha-D-muramate + NADP(+) = UDP-N-acetyl-3-O-(1-carboxyvinyl)-alpha-D-glucosamine + NADPH + H(+)</text>
        <dbReference type="Rhea" id="RHEA:12248"/>
        <dbReference type="ChEBI" id="CHEBI:15378"/>
        <dbReference type="ChEBI" id="CHEBI:57783"/>
        <dbReference type="ChEBI" id="CHEBI:58349"/>
        <dbReference type="ChEBI" id="CHEBI:68483"/>
        <dbReference type="ChEBI" id="CHEBI:70757"/>
        <dbReference type="EC" id="1.3.1.98"/>
    </reaction>
</comment>
<comment type="cofactor">
    <cofactor evidence="1">
        <name>FAD</name>
        <dbReference type="ChEBI" id="CHEBI:57692"/>
    </cofactor>
</comment>
<comment type="pathway">
    <text evidence="1">Cell wall biogenesis; peptidoglycan biosynthesis.</text>
</comment>
<comment type="subcellular location">
    <subcellularLocation>
        <location evidence="1">Cytoplasm</location>
    </subcellularLocation>
</comment>
<comment type="similarity">
    <text evidence="1">Belongs to the MurB family.</text>
</comment>
<dbReference type="EC" id="1.3.1.98" evidence="1"/>
<dbReference type="EMBL" id="BX248355">
    <property type="protein sequence ID" value="CAE48888.1"/>
    <property type="molecule type" value="Genomic_DNA"/>
</dbReference>
<dbReference type="SMR" id="P61434"/>
<dbReference type="STRING" id="257309.DIP0384"/>
<dbReference type="KEGG" id="cdi:DIP0384"/>
<dbReference type="HOGENOM" id="CLU_035304_0_1_11"/>
<dbReference type="UniPathway" id="UPA00219"/>
<dbReference type="Proteomes" id="UP000002198">
    <property type="component" value="Chromosome"/>
</dbReference>
<dbReference type="GO" id="GO:0005829">
    <property type="term" value="C:cytosol"/>
    <property type="evidence" value="ECO:0007669"/>
    <property type="project" value="TreeGrafter"/>
</dbReference>
<dbReference type="GO" id="GO:0071949">
    <property type="term" value="F:FAD binding"/>
    <property type="evidence" value="ECO:0007669"/>
    <property type="project" value="InterPro"/>
</dbReference>
<dbReference type="GO" id="GO:0008762">
    <property type="term" value="F:UDP-N-acetylmuramate dehydrogenase activity"/>
    <property type="evidence" value="ECO:0007669"/>
    <property type="project" value="UniProtKB-UniRule"/>
</dbReference>
<dbReference type="GO" id="GO:0051301">
    <property type="term" value="P:cell division"/>
    <property type="evidence" value="ECO:0007669"/>
    <property type="project" value="UniProtKB-KW"/>
</dbReference>
<dbReference type="GO" id="GO:0071555">
    <property type="term" value="P:cell wall organization"/>
    <property type="evidence" value="ECO:0007669"/>
    <property type="project" value="UniProtKB-KW"/>
</dbReference>
<dbReference type="GO" id="GO:0009252">
    <property type="term" value="P:peptidoglycan biosynthetic process"/>
    <property type="evidence" value="ECO:0007669"/>
    <property type="project" value="UniProtKB-UniRule"/>
</dbReference>
<dbReference type="GO" id="GO:0008360">
    <property type="term" value="P:regulation of cell shape"/>
    <property type="evidence" value="ECO:0007669"/>
    <property type="project" value="UniProtKB-KW"/>
</dbReference>
<dbReference type="Gene3D" id="3.30.465.10">
    <property type="match status" value="1"/>
</dbReference>
<dbReference type="Gene3D" id="3.90.78.10">
    <property type="entry name" value="UDP-N-acetylenolpyruvoylglucosamine reductase, C-terminal domain"/>
    <property type="match status" value="1"/>
</dbReference>
<dbReference type="Gene3D" id="3.30.43.10">
    <property type="entry name" value="Uridine Diphospho-n-acetylenolpyruvylglucosamine Reductase, domain 2"/>
    <property type="match status" value="1"/>
</dbReference>
<dbReference type="HAMAP" id="MF_00037">
    <property type="entry name" value="MurB"/>
    <property type="match status" value="1"/>
</dbReference>
<dbReference type="InterPro" id="IPR016166">
    <property type="entry name" value="FAD-bd_PCMH"/>
</dbReference>
<dbReference type="InterPro" id="IPR036318">
    <property type="entry name" value="FAD-bd_PCMH-like_sf"/>
</dbReference>
<dbReference type="InterPro" id="IPR016167">
    <property type="entry name" value="FAD-bd_PCMH_sub1"/>
</dbReference>
<dbReference type="InterPro" id="IPR016169">
    <property type="entry name" value="FAD-bd_PCMH_sub2"/>
</dbReference>
<dbReference type="InterPro" id="IPR003170">
    <property type="entry name" value="MurB"/>
</dbReference>
<dbReference type="InterPro" id="IPR011601">
    <property type="entry name" value="MurB_C"/>
</dbReference>
<dbReference type="InterPro" id="IPR036635">
    <property type="entry name" value="MurB_C_sf"/>
</dbReference>
<dbReference type="InterPro" id="IPR006094">
    <property type="entry name" value="Oxid_FAD_bind_N"/>
</dbReference>
<dbReference type="NCBIfam" id="NF010478">
    <property type="entry name" value="PRK13903.1"/>
    <property type="match status" value="1"/>
</dbReference>
<dbReference type="PANTHER" id="PTHR21071">
    <property type="entry name" value="UDP-N-ACETYLENOLPYRUVOYLGLUCOSAMINE REDUCTASE"/>
    <property type="match status" value="1"/>
</dbReference>
<dbReference type="PANTHER" id="PTHR21071:SF4">
    <property type="entry name" value="UDP-N-ACETYLENOLPYRUVOYLGLUCOSAMINE REDUCTASE"/>
    <property type="match status" value="1"/>
</dbReference>
<dbReference type="Pfam" id="PF01565">
    <property type="entry name" value="FAD_binding_4"/>
    <property type="match status" value="1"/>
</dbReference>
<dbReference type="Pfam" id="PF02873">
    <property type="entry name" value="MurB_C"/>
    <property type="match status" value="1"/>
</dbReference>
<dbReference type="SUPFAM" id="SSF56176">
    <property type="entry name" value="FAD-binding/transporter-associated domain-like"/>
    <property type="match status" value="1"/>
</dbReference>
<dbReference type="SUPFAM" id="SSF56194">
    <property type="entry name" value="Uridine diphospho-N-Acetylenolpyruvylglucosamine reductase, MurB, C-terminal domain"/>
    <property type="match status" value="1"/>
</dbReference>
<dbReference type="PROSITE" id="PS51387">
    <property type="entry name" value="FAD_PCMH"/>
    <property type="match status" value="1"/>
</dbReference>
<evidence type="ECO:0000255" key="1">
    <source>
        <dbReference type="HAMAP-Rule" id="MF_00037"/>
    </source>
</evidence>
<name>MURB_CORDI</name>
<organism>
    <name type="scientific">Corynebacterium diphtheriae (strain ATCC 700971 / NCTC 13129 / Biotype gravis)</name>
    <dbReference type="NCBI Taxonomy" id="257309"/>
    <lineage>
        <taxon>Bacteria</taxon>
        <taxon>Bacillati</taxon>
        <taxon>Actinomycetota</taxon>
        <taxon>Actinomycetes</taxon>
        <taxon>Mycobacteriales</taxon>
        <taxon>Corynebacteriaceae</taxon>
        <taxon>Corynebacterium</taxon>
    </lineage>
</organism>
<reference key="1">
    <citation type="journal article" date="2003" name="Nucleic Acids Res.">
        <title>The complete genome sequence and analysis of Corynebacterium diphtheriae NCTC13129.</title>
        <authorList>
            <person name="Cerdeno-Tarraga A.-M."/>
            <person name="Efstratiou A."/>
            <person name="Dover L.G."/>
            <person name="Holden M.T.G."/>
            <person name="Pallen M.J."/>
            <person name="Bentley S.D."/>
            <person name="Besra G.S."/>
            <person name="Churcher C.M."/>
            <person name="James K.D."/>
            <person name="De Zoysa A."/>
            <person name="Chillingworth T."/>
            <person name="Cronin A."/>
            <person name="Dowd L."/>
            <person name="Feltwell T."/>
            <person name="Hamlin N."/>
            <person name="Holroyd S."/>
            <person name="Jagels K."/>
            <person name="Moule S."/>
            <person name="Quail M.A."/>
            <person name="Rabbinowitsch E."/>
            <person name="Rutherford K.M."/>
            <person name="Thomson N.R."/>
            <person name="Unwin L."/>
            <person name="Whitehead S."/>
            <person name="Barrell B.G."/>
            <person name="Parkhill J."/>
        </authorList>
    </citation>
    <scope>NUCLEOTIDE SEQUENCE [LARGE SCALE GENOMIC DNA]</scope>
    <source>
        <strain>ATCC 700971 / NCTC 13129 / Biotype gravis</strain>
    </source>
</reference>
<accession>P61434</accession>